<proteinExistence type="inferred from homology"/>
<gene>
    <name evidence="1" type="primary">xseA</name>
    <name type="ordered locus">Tgr7_1034</name>
</gene>
<organism>
    <name type="scientific">Thioalkalivibrio sulfidiphilus (strain HL-EbGR7)</name>
    <dbReference type="NCBI Taxonomy" id="396588"/>
    <lineage>
        <taxon>Bacteria</taxon>
        <taxon>Pseudomonadati</taxon>
        <taxon>Pseudomonadota</taxon>
        <taxon>Gammaproteobacteria</taxon>
        <taxon>Chromatiales</taxon>
        <taxon>Ectothiorhodospiraceae</taxon>
        <taxon>Thioalkalivibrio</taxon>
    </lineage>
</organism>
<accession>B8GP32</accession>
<evidence type="ECO:0000255" key="1">
    <source>
        <dbReference type="HAMAP-Rule" id="MF_00378"/>
    </source>
</evidence>
<protein>
    <recommendedName>
        <fullName evidence="1">Exodeoxyribonuclease 7 large subunit</fullName>
        <ecNumber evidence="1">3.1.11.6</ecNumber>
    </recommendedName>
    <alternativeName>
        <fullName evidence="1">Exodeoxyribonuclease VII large subunit</fullName>
        <shortName evidence="1">Exonuclease VII large subunit</shortName>
    </alternativeName>
</protein>
<name>EX7L_THISH</name>
<comment type="function">
    <text evidence="1">Bidirectionally degrades single-stranded DNA into large acid-insoluble oligonucleotides, which are then degraded further into small acid-soluble oligonucleotides.</text>
</comment>
<comment type="catalytic activity">
    <reaction evidence="1">
        <text>Exonucleolytic cleavage in either 5'- to 3'- or 3'- to 5'-direction to yield nucleoside 5'-phosphates.</text>
        <dbReference type="EC" id="3.1.11.6"/>
    </reaction>
</comment>
<comment type="subunit">
    <text evidence="1">Heterooligomer composed of large and small subunits.</text>
</comment>
<comment type="subcellular location">
    <subcellularLocation>
        <location evidence="1">Cytoplasm</location>
    </subcellularLocation>
</comment>
<comment type="similarity">
    <text evidence="1">Belongs to the XseA family.</text>
</comment>
<feature type="chain" id="PRO_1000205684" description="Exodeoxyribonuclease 7 large subunit">
    <location>
        <begin position="1"/>
        <end position="447"/>
    </location>
</feature>
<keyword id="KW-0963">Cytoplasm</keyword>
<keyword id="KW-0269">Exonuclease</keyword>
<keyword id="KW-0378">Hydrolase</keyword>
<keyword id="KW-0540">Nuclease</keyword>
<keyword id="KW-1185">Reference proteome</keyword>
<sequence>MAVTDRDIFTVTRLNQAVQGLLEGTFPLIWVEGELSSVSRPASGHLYFTLKDSGAQVRCALFRNRAQLMRFRPADGMQVLVRARVGLYAPRGDYQLIVEHMEEAGDGALRRAFEELKQRLEREGLFDAERKRPLPRFPRRLGVITSPTGAAIRDILSVLRRRFPGLPALIYPVPVQGAAAAPAIAEALRTASARKDCDVLILARGGGSLEDLWAFNEEIVARAIHDCEIPVVSGVGHEVDVTIADLAADLRAATPSAAAELVSPLRDEWLLHVERQRRLLVERMQRGLQHQALKLDNLERRLRQQHPERRLQNQAQRVDELERRLALAMQHRLRHRESRLARLQDRLQHRSPARALERLEAREAQLRLRLDSALRRRLDRFEARLAAAGRALHSVSPLATLGRGYSILTTAEGQVIRDASQVQVNDRVEARLGKGRLSCTVVTRYEG</sequence>
<reference key="1">
    <citation type="journal article" date="2011" name="Stand. Genomic Sci.">
        <title>Complete genome sequence of 'Thioalkalivibrio sulfidophilus' HL-EbGr7.</title>
        <authorList>
            <person name="Muyzer G."/>
            <person name="Sorokin D.Y."/>
            <person name="Mavromatis K."/>
            <person name="Lapidus A."/>
            <person name="Clum A."/>
            <person name="Ivanova N."/>
            <person name="Pati A."/>
            <person name="d'Haeseleer P."/>
            <person name="Woyke T."/>
            <person name="Kyrpides N.C."/>
        </authorList>
    </citation>
    <scope>NUCLEOTIDE SEQUENCE [LARGE SCALE GENOMIC DNA]</scope>
    <source>
        <strain>HL-EbGR7</strain>
    </source>
</reference>
<dbReference type="EC" id="3.1.11.6" evidence="1"/>
<dbReference type="EMBL" id="CP001339">
    <property type="protein sequence ID" value="ACL72121.1"/>
    <property type="molecule type" value="Genomic_DNA"/>
</dbReference>
<dbReference type="RefSeq" id="WP_012637605.1">
    <property type="nucleotide sequence ID" value="NC_011901.1"/>
</dbReference>
<dbReference type="SMR" id="B8GP32"/>
<dbReference type="STRING" id="396588.Tgr7_1034"/>
<dbReference type="KEGG" id="tgr:Tgr7_1034"/>
<dbReference type="eggNOG" id="COG1570">
    <property type="taxonomic scope" value="Bacteria"/>
</dbReference>
<dbReference type="HOGENOM" id="CLU_023625_3_1_6"/>
<dbReference type="OrthoDB" id="9802795at2"/>
<dbReference type="Proteomes" id="UP000002383">
    <property type="component" value="Chromosome"/>
</dbReference>
<dbReference type="GO" id="GO:0005737">
    <property type="term" value="C:cytoplasm"/>
    <property type="evidence" value="ECO:0007669"/>
    <property type="project" value="UniProtKB-SubCell"/>
</dbReference>
<dbReference type="GO" id="GO:0009318">
    <property type="term" value="C:exodeoxyribonuclease VII complex"/>
    <property type="evidence" value="ECO:0007669"/>
    <property type="project" value="InterPro"/>
</dbReference>
<dbReference type="GO" id="GO:0008855">
    <property type="term" value="F:exodeoxyribonuclease VII activity"/>
    <property type="evidence" value="ECO:0007669"/>
    <property type="project" value="UniProtKB-UniRule"/>
</dbReference>
<dbReference type="GO" id="GO:0003676">
    <property type="term" value="F:nucleic acid binding"/>
    <property type="evidence" value="ECO:0007669"/>
    <property type="project" value="InterPro"/>
</dbReference>
<dbReference type="GO" id="GO:0006308">
    <property type="term" value="P:DNA catabolic process"/>
    <property type="evidence" value="ECO:0007669"/>
    <property type="project" value="UniProtKB-UniRule"/>
</dbReference>
<dbReference type="CDD" id="cd04489">
    <property type="entry name" value="ExoVII_LU_OBF"/>
    <property type="match status" value="1"/>
</dbReference>
<dbReference type="HAMAP" id="MF_00378">
    <property type="entry name" value="Exonuc_7_L"/>
    <property type="match status" value="1"/>
</dbReference>
<dbReference type="InterPro" id="IPR003753">
    <property type="entry name" value="Exonuc_VII_L"/>
</dbReference>
<dbReference type="InterPro" id="IPR020579">
    <property type="entry name" value="Exonuc_VII_lsu_C"/>
</dbReference>
<dbReference type="InterPro" id="IPR025824">
    <property type="entry name" value="OB-fold_nuc-bd_dom"/>
</dbReference>
<dbReference type="NCBIfam" id="TIGR00237">
    <property type="entry name" value="xseA"/>
    <property type="match status" value="1"/>
</dbReference>
<dbReference type="PANTHER" id="PTHR30008">
    <property type="entry name" value="EXODEOXYRIBONUCLEASE 7 LARGE SUBUNIT"/>
    <property type="match status" value="1"/>
</dbReference>
<dbReference type="PANTHER" id="PTHR30008:SF0">
    <property type="entry name" value="EXODEOXYRIBONUCLEASE 7 LARGE SUBUNIT"/>
    <property type="match status" value="1"/>
</dbReference>
<dbReference type="Pfam" id="PF02601">
    <property type="entry name" value="Exonuc_VII_L"/>
    <property type="match status" value="1"/>
</dbReference>
<dbReference type="Pfam" id="PF13742">
    <property type="entry name" value="tRNA_anti_2"/>
    <property type="match status" value="1"/>
</dbReference>